<comment type="function">
    <text evidence="1">Chaperone involved in the maturation of iron-sulfur cluster-containing proteins. Has a low intrinsic ATPase activity which is markedly stimulated by HscB.</text>
</comment>
<comment type="similarity">
    <text evidence="1">Belongs to the heat shock protein 70 family.</text>
</comment>
<name>HSCA_ACISJ</name>
<feature type="chain" id="PRO_1000044838" description="Chaperone protein HscA homolog">
    <location>
        <begin position="1"/>
        <end position="622"/>
    </location>
</feature>
<evidence type="ECO:0000255" key="1">
    <source>
        <dbReference type="HAMAP-Rule" id="MF_00679"/>
    </source>
</evidence>
<keyword id="KW-0067">ATP-binding</keyword>
<keyword id="KW-0143">Chaperone</keyword>
<keyword id="KW-0547">Nucleotide-binding</keyword>
<sequence>MALLQISEPGQSPDPHQRRVAIGIDLGTTHSLVAAVRNGVAECLPDAQGRVLLPSVVRYLGGGGRQIGYEAAAAQMQDPANTVSSVKRFMGRGLGDITGREKLPYNFIAATDSGGMLSLSTAAGVKSPVEVSAEILATLRYRAEDSFDSDLYGAVITVPAYFDDAQRQATKDAAHLAGLNLLRLINEPTAAAIAYGLDNGAEGVYAVYDLGGGTFDISVLRLAQGVFEVIATGGDSALGGDDYDAALAEWVMQQTGVRASTPEDKTAVRLAARACKEALTATDNVAFTADVAGATVQFDVKREDFAAVTADLTQRSLAAVRRTLRDAQIERDEVKGVVLVGGSTRMPVVRTAVAEFFGREPLTNLNPDEVVAIGAAIQANQLAGNDAAGDLLLLDVIPLSLGIETMGGLVERIIGRNETIPTAKAQDFTTYKDGQTALAIHVVQGERDLVQDCRSLARFELRGIPPMAAGAARIRVTFTVDADGLLSVAAREQASGVEARIDVKPSYGLTDEQIARMLQEGFATAQQDMQTRALVEARVDADRLLIATQSALDVDGDVLTAAERTAIDDLMHALRATLETSTDAAAVEAAAQALAKGTEAFAAQRMNRGIRQALAGKNVSAL</sequence>
<accession>A1W7T4</accession>
<protein>
    <recommendedName>
        <fullName evidence="1">Chaperone protein HscA homolog</fullName>
    </recommendedName>
</protein>
<reference key="1">
    <citation type="submission" date="2006-12" db="EMBL/GenBank/DDBJ databases">
        <title>Complete sequence of chromosome 1 of Acidovorax sp. JS42.</title>
        <authorList>
            <person name="Copeland A."/>
            <person name="Lucas S."/>
            <person name="Lapidus A."/>
            <person name="Barry K."/>
            <person name="Detter J.C."/>
            <person name="Glavina del Rio T."/>
            <person name="Dalin E."/>
            <person name="Tice H."/>
            <person name="Pitluck S."/>
            <person name="Chertkov O."/>
            <person name="Brettin T."/>
            <person name="Bruce D."/>
            <person name="Han C."/>
            <person name="Tapia R."/>
            <person name="Gilna P."/>
            <person name="Schmutz J."/>
            <person name="Larimer F."/>
            <person name="Land M."/>
            <person name="Hauser L."/>
            <person name="Kyrpides N."/>
            <person name="Kim E."/>
            <person name="Stahl D."/>
            <person name="Richardson P."/>
        </authorList>
    </citation>
    <scope>NUCLEOTIDE SEQUENCE [LARGE SCALE GENOMIC DNA]</scope>
    <source>
        <strain>JS42</strain>
    </source>
</reference>
<organism>
    <name type="scientific">Acidovorax sp. (strain JS42)</name>
    <dbReference type="NCBI Taxonomy" id="232721"/>
    <lineage>
        <taxon>Bacteria</taxon>
        <taxon>Pseudomonadati</taxon>
        <taxon>Pseudomonadota</taxon>
        <taxon>Betaproteobacteria</taxon>
        <taxon>Burkholderiales</taxon>
        <taxon>Comamonadaceae</taxon>
        <taxon>Acidovorax</taxon>
    </lineage>
</organism>
<gene>
    <name evidence="1" type="primary">hscA</name>
    <name type="ordered locus">Ajs_2140</name>
</gene>
<proteinExistence type="inferred from homology"/>
<dbReference type="EMBL" id="CP000539">
    <property type="protein sequence ID" value="ABM42309.1"/>
    <property type="molecule type" value="Genomic_DNA"/>
</dbReference>
<dbReference type="SMR" id="A1W7T4"/>
<dbReference type="STRING" id="232721.Ajs_2140"/>
<dbReference type="KEGG" id="ajs:Ajs_2140"/>
<dbReference type="eggNOG" id="COG0443">
    <property type="taxonomic scope" value="Bacteria"/>
</dbReference>
<dbReference type="HOGENOM" id="CLU_005965_2_3_4"/>
<dbReference type="Proteomes" id="UP000000645">
    <property type="component" value="Chromosome"/>
</dbReference>
<dbReference type="GO" id="GO:0005524">
    <property type="term" value="F:ATP binding"/>
    <property type="evidence" value="ECO:0007669"/>
    <property type="project" value="UniProtKB-KW"/>
</dbReference>
<dbReference type="GO" id="GO:0016887">
    <property type="term" value="F:ATP hydrolysis activity"/>
    <property type="evidence" value="ECO:0007669"/>
    <property type="project" value="UniProtKB-UniRule"/>
</dbReference>
<dbReference type="GO" id="GO:0140662">
    <property type="term" value="F:ATP-dependent protein folding chaperone"/>
    <property type="evidence" value="ECO:0007669"/>
    <property type="project" value="InterPro"/>
</dbReference>
<dbReference type="GO" id="GO:0051082">
    <property type="term" value="F:unfolded protein binding"/>
    <property type="evidence" value="ECO:0007669"/>
    <property type="project" value="InterPro"/>
</dbReference>
<dbReference type="GO" id="GO:0016226">
    <property type="term" value="P:iron-sulfur cluster assembly"/>
    <property type="evidence" value="ECO:0007669"/>
    <property type="project" value="InterPro"/>
</dbReference>
<dbReference type="FunFam" id="3.30.420.40:FF:000046">
    <property type="entry name" value="Chaperone protein HscA"/>
    <property type="match status" value="1"/>
</dbReference>
<dbReference type="FunFam" id="2.60.34.10:FF:000005">
    <property type="entry name" value="Chaperone protein HscA homolog"/>
    <property type="match status" value="1"/>
</dbReference>
<dbReference type="Gene3D" id="1.20.1270.10">
    <property type="match status" value="1"/>
</dbReference>
<dbReference type="Gene3D" id="3.30.420.40">
    <property type="match status" value="2"/>
</dbReference>
<dbReference type="Gene3D" id="3.90.640.10">
    <property type="entry name" value="Actin, Chain A, domain 4"/>
    <property type="match status" value="1"/>
</dbReference>
<dbReference type="Gene3D" id="2.60.34.10">
    <property type="entry name" value="Substrate Binding Domain Of DNAk, Chain A, domain 1"/>
    <property type="match status" value="1"/>
</dbReference>
<dbReference type="HAMAP" id="MF_00679">
    <property type="entry name" value="HscA"/>
    <property type="match status" value="1"/>
</dbReference>
<dbReference type="InterPro" id="IPR043129">
    <property type="entry name" value="ATPase_NBD"/>
</dbReference>
<dbReference type="InterPro" id="IPR018181">
    <property type="entry name" value="Heat_shock_70_CS"/>
</dbReference>
<dbReference type="InterPro" id="IPR029048">
    <property type="entry name" value="HSP70_C_sf"/>
</dbReference>
<dbReference type="InterPro" id="IPR029047">
    <property type="entry name" value="HSP70_peptide-bd_sf"/>
</dbReference>
<dbReference type="InterPro" id="IPR013126">
    <property type="entry name" value="Hsp_70_fam"/>
</dbReference>
<dbReference type="InterPro" id="IPR010236">
    <property type="entry name" value="ISC_FeS_clus_asmbl_HscA"/>
</dbReference>
<dbReference type="NCBIfam" id="TIGR01991">
    <property type="entry name" value="HscA"/>
    <property type="match status" value="1"/>
</dbReference>
<dbReference type="NCBIfam" id="NF003520">
    <property type="entry name" value="PRK05183.1"/>
    <property type="match status" value="1"/>
</dbReference>
<dbReference type="PANTHER" id="PTHR19375">
    <property type="entry name" value="HEAT SHOCK PROTEIN 70KDA"/>
    <property type="match status" value="1"/>
</dbReference>
<dbReference type="Pfam" id="PF00012">
    <property type="entry name" value="HSP70"/>
    <property type="match status" value="1"/>
</dbReference>
<dbReference type="PRINTS" id="PR00301">
    <property type="entry name" value="HEATSHOCK70"/>
</dbReference>
<dbReference type="SUPFAM" id="SSF53067">
    <property type="entry name" value="Actin-like ATPase domain"/>
    <property type="match status" value="2"/>
</dbReference>
<dbReference type="SUPFAM" id="SSF100934">
    <property type="entry name" value="Heat shock protein 70kD (HSP70), C-terminal subdomain"/>
    <property type="match status" value="1"/>
</dbReference>
<dbReference type="SUPFAM" id="SSF100920">
    <property type="entry name" value="Heat shock protein 70kD (HSP70), peptide-binding domain"/>
    <property type="match status" value="1"/>
</dbReference>
<dbReference type="PROSITE" id="PS00297">
    <property type="entry name" value="HSP70_1"/>
    <property type="match status" value="1"/>
</dbReference>
<dbReference type="PROSITE" id="PS00329">
    <property type="entry name" value="HSP70_2"/>
    <property type="match status" value="1"/>
</dbReference>
<dbReference type="PROSITE" id="PS01036">
    <property type="entry name" value="HSP70_3"/>
    <property type="match status" value="1"/>
</dbReference>